<feature type="signal peptide" evidence="2">
    <location>
        <begin position="1"/>
        <end position="19"/>
    </location>
</feature>
<feature type="chain" id="PRO_0000007881" description="Glucan 1,3-beta-glucosidase">
    <location>
        <begin position="20"/>
        <end position="425"/>
    </location>
</feature>
<feature type="active site" description="Proton donor" evidence="1">
    <location>
        <position position="219"/>
    </location>
</feature>
<feature type="active site" description="Nucleophile" evidence="1">
    <location>
        <position position="318"/>
    </location>
</feature>
<feature type="disulfide bond" evidence="1">
    <location>
        <begin position="301"/>
        <end position="423"/>
    </location>
</feature>
<feature type="disulfide bond" evidence="1">
    <location>
        <begin position="326"/>
        <end position="352"/>
    </location>
</feature>
<dbReference type="EC" id="3.2.1.58"/>
<dbReference type="EMBL" id="Z46871">
    <property type="protein sequence ID" value="CAA86951.1"/>
    <property type="molecule type" value="Genomic_DNA"/>
</dbReference>
<dbReference type="SMR" id="Q12700"/>
<dbReference type="CAZy" id="GH5">
    <property type="family name" value="Glycoside Hydrolase Family 5"/>
</dbReference>
<dbReference type="GO" id="GO:0009986">
    <property type="term" value="C:cell surface"/>
    <property type="evidence" value="ECO:0007669"/>
    <property type="project" value="TreeGrafter"/>
</dbReference>
<dbReference type="GO" id="GO:0005576">
    <property type="term" value="C:extracellular region"/>
    <property type="evidence" value="ECO:0007669"/>
    <property type="project" value="UniProtKB-SubCell"/>
</dbReference>
<dbReference type="GO" id="GO:0004338">
    <property type="term" value="F:glucan exo-1,3-beta-glucosidase activity"/>
    <property type="evidence" value="ECO:0007669"/>
    <property type="project" value="UniProtKB-EC"/>
</dbReference>
<dbReference type="GO" id="GO:0071555">
    <property type="term" value="P:cell wall organization"/>
    <property type="evidence" value="ECO:0007669"/>
    <property type="project" value="UniProtKB-KW"/>
</dbReference>
<dbReference type="GO" id="GO:0009251">
    <property type="term" value="P:glucan catabolic process"/>
    <property type="evidence" value="ECO:0007669"/>
    <property type="project" value="TreeGrafter"/>
</dbReference>
<dbReference type="FunFam" id="3.20.20.80:FF:000033">
    <property type="entry name" value="Glucan 1,3-beta-glucosidase A"/>
    <property type="match status" value="1"/>
</dbReference>
<dbReference type="Gene3D" id="3.20.20.80">
    <property type="entry name" value="Glycosidases"/>
    <property type="match status" value="1"/>
</dbReference>
<dbReference type="InterPro" id="IPR018087">
    <property type="entry name" value="Glyco_hydro_5_CS"/>
</dbReference>
<dbReference type="InterPro" id="IPR017853">
    <property type="entry name" value="Glycoside_hydrolase_SF"/>
</dbReference>
<dbReference type="InterPro" id="IPR050386">
    <property type="entry name" value="Glycosyl_hydrolase_5"/>
</dbReference>
<dbReference type="PANTHER" id="PTHR31297:SF1">
    <property type="entry name" value="GLUCAN 1,3-BETA-GLUCOSIDASE I_II-RELATED"/>
    <property type="match status" value="1"/>
</dbReference>
<dbReference type="PANTHER" id="PTHR31297">
    <property type="entry name" value="GLUCAN ENDO-1,6-BETA-GLUCOSIDASE B"/>
    <property type="match status" value="1"/>
</dbReference>
<dbReference type="SUPFAM" id="SSF51445">
    <property type="entry name" value="(Trans)glycosidases"/>
    <property type="match status" value="1"/>
</dbReference>
<dbReference type="PROSITE" id="PS00659">
    <property type="entry name" value="GLYCOSYL_HYDROL_F5"/>
    <property type="match status" value="1"/>
</dbReference>
<evidence type="ECO:0000250" key="1"/>
<evidence type="ECO:0000255" key="2"/>
<evidence type="ECO:0000305" key="3"/>
<sequence length="425" mass="49127">MNLTLLLLALIFSPSLIFSLPTANKVKLVKKGLNWDYQNAKIHGVNLGGWFVLEPFITPSLFDIYSKPNDDSQVPVDEYHFTQKLGKDAAQQVLEQHWKTWYKENDFKMMLKYGLNAVRIPIGYWAFKLLDYDPYVQGQVKYLDRALDWARKYNLKVWIDLHGAPGSQNGFDNSGLRDSLGFQQGNNVNFTLEVLEIIGKKYGGPEYEDVVIGIELLNEPLGPSLDLNYLKEFFQQGYQNLRNSGSVQAVIIQDAFQPMGYWDNFLTLDQYWNVVVDHHHYQVFSAGELQRSIDDHITVACNWGWDAKKEYHWNVAGEWSAALTDCARWLNGVGRGARFSGDFDNSPYFGSCDCYVNIATWPSEYRTNVRRYIEAQLDAFEQTGGWFFWNWKCENAIEWDLQGLITAGVFPYPFYNRQFPNQCGF</sequence>
<comment type="function">
    <text evidence="1">Beta-glucanases participate in the metabolism of beta-glucan, the main structural component of the cell wall. It could also function biosynthetically as a transglycosylase (By similarity).</text>
</comment>
<comment type="catalytic activity">
    <reaction>
        <text>Successive hydrolysis of beta-D-glucose units from the non-reducing ends of (1-&gt;3)-beta-D-glucans, releasing alpha-glucose.</text>
        <dbReference type="EC" id="3.2.1.58"/>
    </reaction>
</comment>
<comment type="subcellular location">
    <subcellularLocation>
        <location evidence="3">Secreted</location>
    </subcellularLocation>
</comment>
<comment type="similarity">
    <text evidence="3">Belongs to the glycosyl hydrolase 5 (cellulase A) family.</text>
</comment>
<organism>
    <name type="scientific">Schwanniomyces occidentalis</name>
    <name type="common">Yeast</name>
    <name type="synonym">Debaryomyces occidentalis</name>
    <dbReference type="NCBI Taxonomy" id="27300"/>
    <lineage>
        <taxon>Eukaryota</taxon>
        <taxon>Fungi</taxon>
        <taxon>Dikarya</taxon>
        <taxon>Ascomycota</taxon>
        <taxon>Saccharomycotina</taxon>
        <taxon>Pichiomycetes</taxon>
        <taxon>Debaryomycetaceae</taxon>
        <taxon>Schwanniomyces</taxon>
    </lineage>
</organism>
<reference key="1">
    <citation type="journal article" date="1999" name="Yeast">
        <title>Cloning and characterization of 1,3-beta-glucanase-encoding genes from non-conventional yeasts.</title>
        <authorList>
            <person name="Esteban P.F."/>
            <person name="Vazquez de Aldana C.R."/>
            <person name="del Rey F."/>
        </authorList>
    </citation>
    <scope>NUCLEOTIDE SEQUENCE [GENOMIC DNA]</scope>
    <source>
        <strain>ATCC 26077 / CBS 2863 / JCM 8124 / BCRC 20332 / NBRC 1840 / NRRL Y-2477</strain>
    </source>
</reference>
<proteinExistence type="inferred from homology"/>
<accession>Q12700</accession>
<name>EXG_SCHOC</name>
<keyword id="KW-0961">Cell wall biogenesis/degradation</keyword>
<keyword id="KW-1015">Disulfide bond</keyword>
<keyword id="KW-0326">Glycosidase</keyword>
<keyword id="KW-0378">Hydrolase</keyword>
<keyword id="KW-0964">Secreted</keyword>
<keyword id="KW-0732">Signal</keyword>
<keyword id="KW-0865">Zymogen</keyword>
<protein>
    <recommendedName>
        <fullName>Glucan 1,3-beta-glucosidase</fullName>
        <ecNumber>3.2.1.58</ecNumber>
    </recommendedName>
    <alternativeName>
        <fullName>Exo-1,3-beta-glucanase</fullName>
    </alternativeName>
</protein>